<dbReference type="EMBL" id="U33050">
    <property type="protein sequence ID" value="AAB64907.1"/>
    <property type="molecule type" value="Genomic_DNA"/>
</dbReference>
<dbReference type="EMBL" id="AY558492">
    <property type="protein sequence ID" value="AAS56818.1"/>
    <property type="molecule type" value="Genomic_DNA"/>
</dbReference>
<dbReference type="EMBL" id="BK006938">
    <property type="protein sequence ID" value="DAA12322.1"/>
    <property type="molecule type" value="Genomic_DNA"/>
</dbReference>
<dbReference type="PIR" id="S69656">
    <property type="entry name" value="S69656"/>
</dbReference>
<dbReference type="RefSeq" id="NP_010777.3">
    <property type="nucleotide sequence ID" value="NM_001180797.3"/>
</dbReference>
<dbReference type="PDB" id="3JC5">
    <property type="method" value="EM"/>
    <property type="resolution" value="4.70 A"/>
    <property type="chains" value="D=1-294"/>
</dbReference>
<dbReference type="PDB" id="3JC6">
    <property type="method" value="EM"/>
    <property type="resolution" value="3.70 A"/>
    <property type="chains" value="D=1-294"/>
</dbReference>
<dbReference type="PDB" id="3JC7">
    <property type="method" value="EM"/>
    <property type="resolution" value="4.80 A"/>
    <property type="chains" value="D=1-294"/>
</dbReference>
<dbReference type="PDB" id="4C95">
    <property type="method" value="X-ray"/>
    <property type="resolution" value="2.69 A"/>
    <property type="chains" value="D/E=1-19"/>
</dbReference>
<dbReference type="PDB" id="5NXQ">
    <property type="method" value="X-ray"/>
    <property type="resolution" value="2.41 A"/>
    <property type="chains" value="D/E=1-19"/>
</dbReference>
<dbReference type="PDB" id="5U8S">
    <property type="method" value="EM"/>
    <property type="resolution" value="6.10 A"/>
    <property type="chains" value="D=1-294"/>
</dbReference>
<dbReference type="PDB" id="5U8T">
    <property type="method" value="EM"/>
    <property type="resolution" value="4.90 A"/>
    <property type="chains" value="D=1-294"/>
</dbReference>
<dbReference type="PDB" id="6HV9">
    <property type="method" value="EM"/>
    <property type="resolution" value="4.98 A"/>
    <property type="chains" value="F=1-294"/>
</dbReference>
<dbReference type="PDB" id="6PTJ">
    <property type="method" value="EM"/>
    <property type="resolution" value="3.80 A"/>
    <property type="chains" value="D=1-294"/>
</dbReference>
<dbReference type="PDB" id="6PTN">
    <property type="method" value="EM"/>
    <property type="resolution" value="5.80 A"/>
    <property type="chains" value="D/d=1-294"/>
</dbReference>
<dbReference type="PDB" id="6PTO">
    <property type="method" value="EM"/>
    <property type="resolution" value="7.00 A"/>
    <property type="chains" value="D/d/q=1-294"/>
</dbReference>
<dbReference type="PDB" id="6SKL">
    <property type="method" value="EM"/>
    <property type="resolution" value="3.70 A"/>
    <property type="chains" value="D=1-294"/>
</dbReference>
<dbReference type="PDB" id="6U0M">
    <property type="method" value="EM"/>
    <property type="resolution" value="3.90 A"/>
    <property type="chains" value="D=3-293"/>
</dbReference>
<dbReference type="PDB" id="7PMK">
    <property type="method" value="EM"/>
    <property type="resolution" value="3.20 A"/>
    <property type="chains" value="D=1-294"/>
</dbReference>
<dbReference type="PDB" id="7PMN">
    <property type="method" value="EM"/>
    <property type="resolution" value="3.20 A"/>
    <property type="chains" value="D=1-294"/>
</dbReference>
<dbReference type="PDB" id="7QHS">
    <property type="method" value="EM"/>
    <property type="resolution" value="3.30 A"/>
    <property type="chains" value="D=1-294"/>
</dbReference>
<dbReference type="PDB" id="7Z13">
    <property type="method" value="EM"/>
    <property type="resolution" value="3.40 A"/>
    <property type="chains" value="D/K=1-294"/>
</dbReference>
<dbReference type="PDB" id="8B9A">
    <property type="method" value="EM"/>
    <property type="resolution" value="3.50 A"/>
    <property type="chains" value="F=1-294"/>
</dbReference>
<dbReference type="PDB" id="8B9B">
    <property type="method" value="EM"/>
    <property type="resolution" value="3.50 A"/>
    <property type="chains" value="F=1-294"/>
</dbReference>
<dbReference type="PDB" id="8B9C">
    <property type="method" value="EM"/>
    <property type="resolution" value="4.60 A"/>
    <property type="chains" value="F=1-294"/>
</dbReference>
<dbReference type="PDB" id="8KG6">
    <property type="method" value="EM"/>
    <property type="resolution" value="3.07 A"/>
    <property type="chains" value="D=1-294"/>
</dbReference>
<dbReference type="PDB" id="8KG8">
    <property type="method" value="EM"/>
    <property type="resolution" value="4.23 A"/>
    <property type="chains" value="D=1-294"/>
</dbReference>
<dbReference type="PDB" id="8KG9">
    <property type="method" value="EM"/>
    <property type="resolution" value="4.52 A"/>
    <property type="chains" value="D=1-294"/>
</dbReference>
<dbReference type="PDB" id="8P5E">
    <property type="method" value="EM"/>
    <property type="resolution" value="3.90 A"/>
    <property type="chains" value="D=1-294"/>
</dbReference>
<dbReference type="PDB" id="8P62">
    <property type="method" value="EM"/>
    <property type="resolution" value="3.90 A"/>
    <property type="chains" value="D=1-294"/>
</dbReference>
<dbReference type="PDB" id="8P63">
    <property type="method" value="EM"/>
    <property type="resolution" value="3.70 A"/>
    <property type="chains" value="D=1-294"/>
</dbReference>
<dbReference type="PDB" id="8W7M">
    <property type="method" value="EM"/>
    <property type="resolution" value="4.12 A"/>
    <property type="chains" value="D=1-294"/>
</dbReference>
<dbReference type="PDB" id="8W7S">
    <property type="method" value="EM"/>
    <property type="resolution" value="7.39 A"/>
    <property type="chains" value="D=1-294"/>
</dbReference>
<dbReference type="PDB" id="8XGC">
    <property type="method" value="EM"/>
    <property type="resolution" value="3.70 A"/>
    <property type="chains" value="D=1-294"/>
</dbReference>
<dbReference type="PDBsum" id="3JC5"/>
<dbReference type="PDBsum" id="3JC6"/>
<dbReference type="PDBsum" id="3JC7"/>
<dbReference type="PDBsum" id="4C95"/>
<dbReference type="PDBsum" id="5NXQ"/>
<dbReference type="PDBsum" id="5U8S"/>
<dbReference type="PDBsum" id="5U8T"/>
<dbReference type="PDBsum" id="6HV9"/>
<dbReference type="PDBsum" id="6PTJ"/>
<dbReference type="PDBsum" id="6PTN"/>
<dbReference type="PDBsum" id="6PTO"/>
<dbReference type="PDBsum" id="6SKL"/>
<dbReference type="PDBsum" id="6U0M"/>
<dbReference type="PDBsum" id="7PMK"/>
<dbReference type="PDBsum" id="7PMN"/>
<dbReference type="PDBsum" id="7QHS"/>
<dbReference type="PDBsum" id="7Z13"/>
<dbReference type="PDBsum" id="8B9A"/>
<dbReference type="PDBsum" id="8B9B"/>
<dbReference type="PDBsum" id="8B9C"/>
<dbReference type="PDBsum" id="8KG6"/>
<dbReference type="PDBsum" id="8KG8"/>
<dbReference type="PDBsum" id="8KG9"/>
<dbReference type="PDBsum" id="8P5E"/>
<dbReference type="PDBsum" id="8P62"/>
<dbReference type="PDBsum" id="8P63"/>
<dbReference type="PDBsum" id="8W7M"/>
<dbReference type="PDBsum" id="8W7S"/>
<dbReference type="PDBsum" id="8XGC"/>
<dbReference type="EMDB" id="EMD-0288"/>
<dbReference type="EMDB" id="EMD-10227"/>
<dbReference type="EMDB" id="EMD-13537"/>
<dbReference type="EMDB" id="EMD-13539"/>
<dbReference type="EMDB" id="EMD-13978"/>
<dbReference type="EMDB" id="EMD-14439"/>
<dbReference type="EMDB" id="EMD-15924"/>
<dbReference type="EMDB" id="EMD-17449"/>
<dbReference type="EMDB" id="EMD-17458"/>
<dbReference type="EMDB" id="EMD-17459"/>
<dbReference type="EMDB" id="EMD-20471"/>
<dbReference type="EMDB" id="EMD-20472"/>
<dbReference type="EMDB" id="EMD-20473"/>
<dbReference type="EMDB" id="EMD-20607"/>
<dbReference type="EMDB" id="EMD-37211"/>
<dbReference type="EMDB" id="EMD-37213"/>
<dbReference type="EMDB" id="EMD-37215"/>
<dbReference type="EMDB" id="EMD-37343"/>
<dbReference type="EMDB" id="EMD-37345"/>
<dbReference type="EMDB" id="EMD-38317"/>
<dbReference type="EMDB" id="EMD-8518"/>
<dbReference type="EMDB" id="EMD-8519"/>
<dbReference type="SMR" id="Q03406"/>
<dbReference type="BioGRID" id="32541">
    <property type="interactions" value="180"/>
</dbReference>
<dbReference type="ComplexPortal" id="CPX-1641">
    <property type="entry name" value="GINS complex"/>
</dbReference>
<dbReference type="DIP" id="DIP-1813N"/>
<dbReference type="FunCoup" id="Q03406">
    <property type="interactions" value="773"/>
</dbReference>
<dbReference type="IntAct" id="Q03406">
    <property type="interactions" value="30"/>
</dbReference>
<dbReference type="MINT" id="Q03406"/>
<dbReference type="STRING" id="4932.YDR489W"/>
<dbReference type="iPTMnet" id="Q03406"/>
<dbReference type="PaxDb" id="4932-YDR489W"/>
<dbReference type="PeptideAtlas" id="Q03406"/>
<dbReference type="EnsemblFungi" id="YDR489W_mRNA">
    <property type="protein sequence ID" value="YDR489W"/>
    <property type="gene ID" value="YDR489W"/>
</dbReference>
<dbReference type="GeneID" id="852100"/>
<dbReference type="KEGG" id="sce:YDR489W"/>
<dbReference type="AGR" id="SGD:S000002897"/>
<dbReference type="SGD" id="S000002897">
    <property type="gene designation" value="SLD5"/>
</dbReference>
<dbReference type="VEuPathDB" id="FungiDB:YDR489W"/>
<dbReference type="eggNOG" id="KOG3176">
    <property type="taxonomic scope" value="Eukaryota"/>
</dbReference>
<dbReference type="GeneTree" id="ENSGT00390000003246"/>
<dbReference type="HOGENOM" id="CLU_071893_2_0_1"/>
<dbReference type="InParanoid" id="Q03406"/>
<dbReference type="OMA" id="ILETAWI"/>
<dbReference type="OrthoDB" id="338231at2759"/>
<dbReference type="BioCyc" id="YEAST:G3O-30013-MONOMER"/>
<dbReference type="Reactome" id="R-SCE-176974">
    <property type="pathway name" value="Unwinding of DNA"/>
</dbReference>
<dbReference type="BioGRID-ORCS" id="852100">
    <property type="hits" value="1 hit in 10 CRISPR screens"/>
</dbReference>
<dbReference type="EvolutionaryTrace" id="Q03406"/>
<dbReference type="PRO" id="PR:Q03406"/>
<dbReference type="Proteomes" id="UP000002311">
    <property type="component" value="Chromosome IV"/>
</dbReference>
<dbReference type="RNAct" id="Q03406">
    <property type="molecule type" value="protein"/>
</dbReference>
<dbReference type="GO" id="GO:0071162">
    <property type="term" value="C:CMG complex"/>
    <property type="evidence" value="ECO:0000314"/>
    <property type="project" value="SGD"/>
</dbReference>
<dbReference type="GO" id="GO:0031261">
    <property type="term" value="C:DNA replication preinitiation complex"/>
    <property type="evidence" value="ECO:0000315"/>
    <property type="project" value="SGD"/>
</dbReference>
<dbReference type="GO" id="GO:0000811">
    <property type="term" value="C:GINS complex"/>
    <property type="evidence" value="ECO:0000353"/>
    <property type="project" value="ComplexPortal"/>
</dbReference>
<dbReference type="GO" id="GO:0043596">
    <property type="term" value="C:nuclear replication fork"/>
    <property type="evidence" value="ECO:0000314"/>
    <property type="project" value="ComplexPortal"/>
</dbReference>
<dbReference type="GO" id="GO:0005634">
    <property type="term" value="C:nucleus"/>
    <property type="evidence" value="ECO:0000303"/>
    <property type="project" value="ComplexPortal"/>
</dbReference>
<dbReference type="GO" id="GO:0006261">
    <property type="term" value="P:DNA-templated DNA replication"/>
    <property type="evidence" value="ECO:0000315"/>
    <property type="project" value="SGD"/>
</dbReference>
<dbReference type="GO" id="GO:0000727">
    <property type="term" value="P:double-strand break repair via break-induced replication"/>
    <property type="evidence" value="ECO:0000315"/>
    <property type="project" value="SGD"/>
</dbReference>
<dbReference type="CDD" id="cd11711">
    <property type="entry name" value="GINS_A_Sld5"/>
    <property type="match status" value="1"/>
</dbReference>
<dbReference type="CDD" id="cd21692">
    <property type="entry name" value="GINS_B_Sld5"/>
    <property type="match status" value="1"/>
</dbReference>
<dbReference type="FunFam" id="1.20.58.1030:FF:000009">
    <property type="entry name" value="DNA replication complex GINS protein SLD5"/>
    <property type="match status" value="1"/>
</dbReference>
<dbReference type="FunFam" id="3.40.5.60:FF:000002">
    <property type="entry name" value="DNA replication complex GINS protein SLD5"/>
    <property type="match status" value="1"/>
</dbReference>
<dbReference type="Gene3D" id="1.20.58.1030">
    <property type="match status" value="1"/>
</dbReference>
<dbReference type="Gene3D" id="3.40.5.60">
    <property type="match status" value="1"/>
</dbReference>
<dbReference type="InterPro" id="IPR021151">
    <property type="entry name" value="GINS_A"/>
</dbReference>
<dbReference type="InterPro" id="IPR036224">
    <property type="entry name" value="GINS_bundle-like_dom_sf"/>
</dbReference>
<dbReference type="InterPro" id="IPR008591">
    <property type="entry name" value="GINS_Sld5"/>
</dbReference>
<dbReference type="InterPro" id="IPR031633">
    <property type="entry name" value="SLD5_C"/>
</dbReference>
<dbReference type="InterPro" id="IPR038749">
    <property type="entry name" value="Sld5_GINS_A"/>
</dbReference>
<dbReference type="PANTHER" id="PTHR21206:SF0">
    <property type="entry name" value="DNA REPLICATION COMPLEX GINS PROTEIN SLD5"/>
    <property type="match status" value="1"/>
</dbReference>
<dbReference type="PANTHER" id="PTHR21206">
    <property type="entry name" value="SLD5 PROTEIN"/>
    <property type="match status" value="1"/>
</dbReference>
<dbReference type="Pfam" id="PF05916">
    <property type="entry name" value="Sld5"/>
    <property type="match status" value="1"/>
</dbReference>
<dbReference type="Pfam" id="PF16922">
    <property type="entry name" value="SLD5_C"/>
    <property type="match status" value="1"/>
</dbReference>
<dbReference type="PIRSF" id="PIRSF007764">
    <property type="entry name" value="Sld5"/>
    <property type="match status" value="1"/>
</dbReference>
<dbReference type="SUPFAM" id="SSF158573">
    <property type="entry name" value="GINS helical bundle-like"/>
    <property type="match status" value="1"/>
</dbReference>
<dbReference type="SUPFAM" id="SSF160059">
    <property type="entry name" value="PriA/YqbF domain"/>
    <property type="match status" value="1"/>
</dbReference>
<proteinExistence type="evidence at protein level"/>
<gene>
    <name evidence="6" type="primary">SLD5</name>
    <name type="ordered locus">YDR489W</name>
</gene>
<feature type="chain" id="PRO_0000071955" description="DNA replication complex GINS protein SLD5">
    <location>
        <begin position="1"/>
        <end position="294"/>
    </location>
</feature>
<feature type="mutagenesis site" description="In sld5-8; temperature-sensitive mutant; in association with P-66. Defective in DNA replication." evidence="2">
    <original>S</original>
    <variation>P</variation>
    <location>
        <position position="21"/>
    </location>
</feature>
<feature type="mutagenesis site" description="In sld5-8; temperature-sensitive mutant; in association with P-21. Defective in DNA replication." evidence="2">
    <original>S</original>
    <variation>P</variation>
    <location>
        <position position="66"/>
    </location>
</feature>
<feature type="mutagenesis site" description="In sld5-12; temperature-sensitive mutant. Defective in DNA replication." evidence="2">
    <original>W</original>
    <variation>R</variation>
    <location>
        <position position="67"/>
    </location>
</feature>
<feature type="mutagenesis site" description="In sld5-2; temperature-sensitive mutant. Defective in DNA replication." evidence="2">
    <original>K</original>
    <variation>E</variation>
    <location>
        <position position="150"/>
    </location>
</feature>
<feature type="mutagenesis site" description="In sld5-13; temperature-sensitive mutant. Defective in DNA replication." evidence="2">
    <original>L</original>
    <variation>P</variation>
    <location>
        <position position="293"/>
    </location>
</feature>
<feature type="sequence conflict" description="In Ref. 4; AAS56818." evidence="4" ref="4">
    <original>V</original>
    <variation>A</variation>
    <location>
        <position position="232"/>
    </location>
</feature>
<feature type="turn" evidence="7">
    <location>
        <begin position="6"/>
        <end position="8"/>
    </location>
</feature>
<feature type="helix" evidence="8">
    <location>
        <begin position="56"/>
        <end position="72"/>
    </location>
</feature>
<feature type="helix" evidence="8">
    <location>
        <begin position="81"/>
        <end position="106"/>
    </location>
</feature>
<feature type="helix" evidence="8">
    <location>
        <begin position="124"/>
        <end position="153"/>
    </location>
</feature>
<feature type="helix" evidence="8">
    <location>
        <begin position="155"/>
        <end position="163"/>
    </location>
</feature>
<feature type="helix" evidence="8">
    <location>
        <begin position="171"/>
        <end position="174"/>
    </location>
</feature>
<feature type="helix" evidence="8">
    <location>
        <begin position="177"/>
        <end position="197"/>
    </location>
</feature>
<feature type="helix" evidence="8">
    <location>
        <begin position="199"/>
        <end position="201"/>
    </location>
</feature>
<feature type="turn" evidence="8">
    <location>
        <begin position="204"/>
        <end position="206"/>
    </location>
</feature>
<feature type="strand" evidence="8">
    <location>
        <begin position="212"/>
        <end position="216"/>
    </location>
</feature>
<feature type="strand" evidence="8">
    <location>
        <begin position="227"/>
        <end position="231"/>
    </location>
</feature>
<feature type="strand" evidence="8">
    <location>
        <begin position="236"/>
        <end position="238"/>
    </location>
</feature>
<feature type="turn" evidence="8">
    <location>
        <begin position="240"/>
        <end position="242"/>
    </location>
</feature>
<feature type="helix" evidence="8">
    <location>
        <begin position="250"/>
        <end position="252"/>
    </location>
</feature>
<feature type="strand" evidence="8">
    <location>
        <begin position="254"/>
        <end position="260"/>
    </location>
</feature>
<feature type="turn" evidence="8">
    <location>
        <begin position="261"/>
        <end position="264"/>
    </location>
</feature>
<feature type="strand" evidence="8">
    <location>
        <begin position="265"/>
        <end position="270"/>
    </location>
</feature>
<feature type="strand" evidence="8">
    <location>
        <begin position="274"/>
        <end position="278"/>
    </location>
</feature>
<feature type="helix" evidence="8">
    <location>
        <begin position="280"/>
        <end position="282"/>
    </location>
</feature>
<feature type="helix" evidence="8">
    <location>
        <begin position="283"/>
        <end position="287"/>
    </location>
</feature>
<feature type="strand" evidence="8">
    <location>
        <begin position="290"/>
        <end position="293"/>
    </location>
</feature>
<sequence>MDINIDDILAELDKETTAVDSTKITQGSSSTTHRDANTIVGSSLDLNDKTQIYVSPQQDFSDLMKSWKNERCSPELLPYPHQLMKRLLNRISMQSQLIENISMGFLDMQNASNANPPMPNESKLPLLCMETELERLKFVIRSYIRCRLSKIDKFSLYLRQLNEDENSLISLTDLLSKDEIKYHDTHSLIWLKLVNDSILKYMPEELQAINDTEGSVNMIDEPDWNKFVFIHVNGPPDGKWNEDPLLQENEFGKPCYTVTIPDLKEEVELTIGSIYVMRYEVIRDLLRDDKVALI</sequence>
<comment type="function">
    <text evidence="1 2">Required for DNA replication. Functions as part of the GINS complex which plays an essential role in the initiation of DNA replication by binding to DNA replication origins and facilitating the assembly of the DNA replication machinery.</text>
</comment>
<comment type="subunit">
    <text evidence="3">Component of the GINS complex which is a heterotetramer composed of SLD5, PSF1, PSF2 and PSF3. Interacts with PSF2.</text>
</comment>
<comment type="interaction">
    <interactant intactId="EBI-37437">
        <id>Q03406</id>
    </interactant>
    <interactant intactId="EBI-5209">
        <id>Q01454</id>
        <label>CTF4</label>
    </interactant>
    <organismsDiffer>false</organismsDiffer>
    <experiments>14</experiments>
</comment>
<comment type="interaction">
    <interactant intactId="EBI-37437">
        <id>Q03406</id>
    </interactant>
    <interactant intactId="EBI-22066">
        <id>Q12488</id>
        <label>PSF1</label>
    </interactant>
    <organismsDiffer>false</organismsDiffer>
    <experiments>6</experiments>
</comment>
<comment type="interaction">
    <interactant intactId="EBI-37437">
        <id>Q03406</id>
    </interactant>
    <interactant intactId="EBI-25936">
        <id>P40359</id>
        <label>PSF2</label>
    </interactant>
    <organismsDiffer>false</organismsDiffer>
    <experiments>7</experiments>
</comment>
<comment type="subcellular location">
    <subcellularLocation>
        <location evidence="2">Nucleus</location>
    </subcellularLocation>
</comment>
<comment type="similarity">
    <text evidence="4">Belongs to the GINS4/SLD5 family.</text>
</comment>
<organism>
    <name type="scientific">Saccharomyces cerevisiae (strain ATCC 204508 / S288c)</name>
    <name type="common">Baker's yeast</name>
    <dbReference type="NCBI Taxonomy" id="559292"/>
    <lineage>
        <taxon>Eukaryota</taxon>
        <taxon>Fungi</taxon>
        <taxon>Dikarya</taxon>
        <taxon>Ascomycota</taxon>
        <taxon>Saccharomycotina</taxon>
        <taxon>Saccharomycetes</taxon>
        <taxon>Saccharomycetales</taxon>
        <taxon>Saccharomycetaceae</taxon>
        <taxon>Saccharomyces</taxon>
    </lineage>
</organism>
<evidence type="ECO:0000250" key="1">
    <source>
        <dbReference type="UniProtKB" id="P40359"/>
    </source>
</evidence>
<evidence type="ECO:0000269" key="2">
    <source>
    </source>
</evidence>
<evidence type="ECO:0000269" key="3">
    <source>
    </source>
</evidence>
<evidence type="ECO:0000305" key="4"/>
<evidence type="ECO:0000312" key="5">
    <source>
        <dbReference type="EMBL" id="AAB64907.1"/>
    </source>
</evidence>
<evidence type="ECO:0000312" key="6">
    <source>
        <dbReference type="SGD" id="S000002897"/>
    </source>
</evidence>
<evidence type="ECO:0007829" key="7">
    <source>
        <dbReference type="PDB" id="5NXQ"/>
    </source>
</evidence>
<evidence type="ECO:0007829" key="8">
    <source>
        <dbReference type="PDB" id="7PMK"/>
    </source>
</evidence>
<protein>
    <recommendedName>
        <fullName>DNA replication complex GINS protein SLD5</fullName>
    </recommendedName>
</protein>
<keyword id="KW-0002">3D-structure</keyword>
<keyword id="KW-0235">DNA replication</keyword>
<keyword id="KW-0539">Nucleus</keyword>
<keyword id="KW-1185">Reference proteome</keyword>
<name>SLD5_YEAST</name>
<accession>Q03406</accession>
<accession>D6VTB2</accession>
<accession>Q6Q558</accession>
<reference evidence="4" key="1">
    <citation type="journal article" date="2003" name="Genes Dev.">
        <title>GINS, a novel multiprotein complex required for chromosomal DNA replication in budding yeast.</title>
        <authorList>
            <person name="Takayama Y."/>
            <person name="Kamimura Y."/>
            <person name="Okawa M."/>
            <person name="Muramatsu S."/>
            <person name="Sugino A."/>
            <person name="Araki H."/>
        </authorList>
    </citation>
    <scope>NUCLEOTIDE SEQUENCE [GENOMIC DNA]</scope>
    <scope>FUNCTION</scope>
    <scope>COMPOSITION OF THE GINS COMPLEX</scope>
    <scope>SUBCELLULAR LOCATION</scope>
    <scope>MUTAGENESIS OF SER-21; SER-66; TRP-67; LYS-150 AND LEU-293</scope>
</reference>
<reference evidence="4 5" key="2">
    <citation type="journal article" date="1997" name="Nature">
        <title>The nucleotide sequence of Saccharomyces cerevisiae chromosome IV.</title>
        <authorList>
            <person name="Jacq C."/>
            <person name="Alt-Moerbe J."/>
            <person name="Andre B."/>
            <person name="Arnold W."/>
            <person name="Bahr A."/>
            <person name="Ballesta J.P.G."/>
            <person name="Bargues M."/>
            <person name="Baron L."/>
            <person name="Becker A."/>
            <person name="Biteau N."/>
            <person name="Bloecker H."/>
            <person name="Blugeon C."/>
            <person name="Boskovic J."/>
            <person name="Brandt P."/>
            <person name="Brueckner M."/>
            <person name="Buitrago M.J."/>
            <person name="Coster F."/>
            <person name="Delaveau T."/>
            <person name="del Rey F."/>
            <person name="Dujon B."/>
            <person name="Eide L.G."/>
            <person name="Garcia-Cantalejo J.M."/>
            <person name="Goffeau A."/>
            <person name="Gomez-Peris A."/>
            <person name="Granotier C."/>
            <person name="Hanemann V."/>
            <person name="Hankeln T."/>
            <person name="Hoheisel J.D."/>
            <person name="Jaeger W."/>
            <person name="Jimenez A."/>
            <person name="Jonniaux J.-L."/>
            <person name="Kraemer C."/>
            <person name="Kuester H."/>
            <person name="Laamanen P."/>
            <person name="Legros Y."/>
            <person name="Louis E.J."/>
            <person name="Moeller-Rieker S."/>
            <person name="Monnet A."/>
            <person name="Moro M."/>
            <person name="Mueller-Auer S."/>
            <person name="Nussbaumer B."/>
            <person name="Paricio N."/>
            <person name="Paulin L."/>
            <person name="Perea J."/>
            <person name="Perez-Alonso M."/>
            <person name="Perez-Ortin J.E."/>
            <person name="Pohl T.M."/>
            <person name="Prydz H."/>
            <person name="Purnelle B."/>
            <person name="Rasmussen S.W."/>
            <person name="Remacha M.A."/>
            <person name="Revuelta J.L."/>
            <person name="Rieger M."/>
            <person name="Salom D."/>
            <person name="Saluz H.P."/>
            <person name="Saiz J.E."/>
            <person name="Saren A.-M."/>
            <person name="Schaefer M."/>
            <person name="Scharfe M."/>
            <person name="Schmidt E.R."/>
            <person name="Schneider C."/>
            <person name="Scholler P."/>
            <person name="Schwarz S."/>
            <person name="Soler-Mira A."/>
            <person name="Urrestarazu L.A."/>
            <person name="Verhasselt P."/>
            <person name="Vissers S."/>
            <person name="Voet M."/>
            <person name="Volckaert G."/>
            <person name="Wagner G."/>
            <person name="Wambutt R."/>
            <person name="Wedler E."/>
            <person name="Wedler H."/>
            <person name="Woelfl S."/>
            <person name="Harris D.E."/>
            <person name="Bowman S."/>
            <person name="Brown D."/>
            <person name="Churcher C.M."/>
            <person name="Connor R."/>
            <person name="Dedman K."/>
            <person name="Gentles S."/>
            <person name="Hamlin N."/>
            <person name="Hunt S."/>
            <person name="Jones L."/>
            <person name="McDonald S."/>
            <person name="Murphy L.D."/>
            <person name="Niblett D."/>
            <person name="Odell C."/>
            <person name="Oliver K."/>
            <person name="Rajandream M.A."/>
            <person name="Richards C."/>
            <person name="Shore L."/>
            <person name="Walsh S.V."/>
            <person name="Barrell B.G."/>
            <person name="Dietrich F.S."/>
            <person name="Mulligan J.T."/>
            <person name="Allen E."/>
            <person name="Araujo R."/>
            <person name="Aviles E."/>
            <person name="Berno A."/>
            <person name="Carpenter J."/>
            <person name="Chen E."/>
            <person name="Cherry J.M."/>
            <person name="Chung E."/>
            <person name="Duncan M."/>
            <person name="Hunicke-Smith S."/>
            <person name="Hyman R.W."/>
            <person name="Komp C."/>
            <person name="Lashkari D."/>
            <person name="Lew H."/>
            <person name="Lin D."/>
            <person name="Mosedale D."/>
            <person name="Nakahara K."/>
            <person name="Namath A."/>
            <person name="Oefner P."/>
            <person name="Oh C."/>
            <person name="Petel F.X."/>
            <person name="Roberts D."/>
            <person name="Schramm S."/>
            <person name="Schroeder M."/>
            <person name="Shogren T."/>
            <person name="Shroff N."/>
            <person name="Winant A."/>
            <person name="Yelton M.A."/>
            <person name="Botstein D."/>
            <person name="Davis R.W."/>
            <person name="Johnston M."/>
            <person name="Andrews S."/>
            <person name="Brinkman R."/>
            <person name="Cooper J."/>
            <person name="Ding H."/>
            <person name="Du Z."/>
            <person name="Favello A."/>
            <person name="Fulton L."/>
            <person name="Gattung S."/>
            <person name="Greco T."/>
            <person name="Hallsworth K."/>
            <person name="Hawkins J."/>
            <person name="Hillier L.W."/>
            <person name="Jier M."/>
            <person name="Johnson D."/>
            <person name="Johnston L."/>
            <person name="Kirsten J."/>
            <person name="Kucaba T."/>
            <person name="Langston Y."/>
            <person name="Latreille P."/>
            <person name="Le T."/>
            <person name="Mardis E."/>
            <person name="Menezes S."/>
            <person name="Miller N."/>
            <person name="Nhan M."/>
            <person name="Pauley A."/>
            <person name="Peluso D."/>
            <person name="Rifkin L."/>
            <person name="Riles L."/>
            <person name="Taich A."/>
            <person name="Trevaskis E."/>
            <person name="Vignati D."/>
            <person name="Wilcox L."/>
            <person name="Wohldman P."/>
            <person name="Vaudin M."/>
            <person name="Wilson R."/>
            <person name="Waterston R."/>
            <person name="Albermann K."/>
            <person name="Hani J."/>
            <person name="Heumann K."/>
            <person name="Kleine K."/>
            <person name="Mewes H.-W."/>
            <person name="Zollner A."/>
            <person name="Zaccaria P."/>
        </authorList>
    </citation>
    <scope>NUCLEOTIDE SEQUENCE [LARGE SCALE GENOMIC DNA]</scope>
    <source>
        <strain>ATCC 204508 / S288c</strain>
    </source>
</reference>
<reference key="3">
    <citation type="journal article" date="2014" name="G3 (Bethesda)">
        <title>The reference genome sequence of Saccharomyces cerevisiae: Then and now.</title>
        <authorList>
            <person name="Engel S.R."/>
            <person name="Dietrich F.S."/>
            <person name="Fisk D.G."/>
            <person name="Binkley G."/>
            <person name="Balakrishnan R."/>
            <person name="Costanzo M.C."/>
            <person name="Dwight S.S."/>
            <person name="Hitz B.C."/>
            <person name="Karra K."/>
            <person name="Nash R.S."/>
            <person name="Weng S."/>
            <person name="Wong E.D."/>
            <person name="Lloyd P."/>
            <person name="Skrzypek M.S."/>
            <person name="Miyasato S.R."/>
            <person name="Simison M."/>
            <person name="Cherry J.M."/>
        </authorList>
    </citation>
    <scope>GENOME REANNOTATION</scope>
    <source>
        <strain>ATCC 204508 / S288c</strain>
    </source>
</reference>
<reference key="4">
    <citation type="journal article" date="2007" name="Genome Res.">
        <title>Approaching a complete repository of sequence-verified protein-encoding clones for Saccharomyces cerevisiae.</title>
        <authorList>
            <person name="Hu Y."/>
            <person name="Rolfs A."/>
            <person name="Bhullar B."/>
            <person name="Murthy T.V.S."/>
            <person name="Zhu C."/>
            <person name="Berger M.F."/>
            <person name="Camargo A.A."/>
            <person name="Kelley F."/>
            <person name="McCarron S."/>
            <person name="Jepson D."/>
            <person name="Richardson A."/>
            <person name="Raphael J."/>
            <person name="Moreira D."/>
            <person name="Taycher E."/>
            <person name="Zuo D."/>
            <person name="Mohr S."/>
            <person name="Kane M.F."/>
            <person name="Williamson J."/>
            <person name="Simpson A.J.G."/>
            <person name="Bulyk M.L."/>
            <person name="Harlow E."/>
            <person name="Marsischky G."/>
            <person name="Kolodner R.D."/>
            <person name="LaBaer J."/>
        </authorList>
    </citation>
    <scope>NUCLEOTIDE SEQUENCE [GENOMIC DNA]</scope>
    <source>
        <strain>ATCC 204508 / S288c</strain>
    </source>
</reference>
<reference key="5">
    <citation type="journal article" date="2003" name="Mol. Cell">
        <title>Assigning function to yeast proteins by integration of technologies.</title>
        <authorList>
            <person name="Hazbun T.R."/>
            <person name="Malmstroem L."/>
            <person name="Anderson S."/>
            <person name="Graczyk B.J."/>
            <person name="Fox B."/>
            <person name="Riffle M."/>
            <person name="Sundin B.A."/>
            <person name="Aranda J.D."/>
            <person name="McDonald W.H."/>
            <person name="Chiu C.-H."/>
            <person name="Snydsman B.E."/>
            <person name="Bradley P."/>
            <person name="Muller E.G.D."/>
            <person name="Fields S."/>
            <person name="Baker D."/>
            <person name="Yates J.R. III"/>
            <person name="Davis T.N."/>
        </authorList>
    </citation>
    <scope>IDENTIFICATION BY MASS SPECTROMETRY</scope>
    <scope>INTERACTION WITH PSF2</scope>
</reference>